<reference key="1">
    <citation type="journal article" date="1997" name="Nature">
        <title>The nucleotide sequence of Saccharomyces cerevisiae chromosome IX.</title>
        <authorList>
            <person name="Churcher C.M."/>
            <person name="Bowman S."/>
            <person name="Badcock K."/>
            <person name="Bankier A.T."/>
            <person name="Brown D."/>
            <person name="Chillingworth T."/>
            <person name="Connor R."/>
            <person name="Devlin K."/>
            <person name="Gentles S."/>
            <person name="Hamlin N."/>
            <person name="Harris D.E."/>
            <person name="Horsnell T."/>
            <person name="Hunt S."/>
            <person name="Jagels K."/>
            <person name="Jones M."/>
            <person name="Lye G."/>
            <person name="Moule S."/>
            <person name="Odell C."/>
            <person name="Pearson D."/>
            <person name="Rajandream M.A."/>
            <person name="Rice P."/>
            <person name="Rowley N."/>
            <person name="Skelton J."/>
            <person name="Smith V."/>
            <person name="Walsh S.V."/>
            <person name="Whitehead S."/>
            <person name="Barrell B.G."/>
        </authorList>
    </citation>
    <scope>NUCLEOTIDE SEQUENCE [LARGE SCALE GENOMIC DNA]</scope>
    <source>
        <strain>ATCC 204508 / S288c</strain>
    </source>
</reference>
<reference key="2">
    <citation type="journal article" date="2014" name="G3 (Bethesda)">
        <title>The reference genome sequence of Saccharomyces cerevisiae: Then and now.</title>
        <authorList>
            <person name="Engel S.R."/>
            <person name="Dietrich F.S."/>
            <person name="Fisk D.G."/>
            <person name="Binkley G."/>
            <person name="Balakrishnan R."/>
            <person name="Costanzo M.C."/>
            <person name="Dwight S.S."/>
            <person name="Hitz B.C."/>
            <person name="Karra K."/>
            <person name="Nash R.S."/>
            <person name="Weng S."/>
            <person name="Wong E.D."/>
            <person name="Lloyd P."/>
            <person name="Skrzypek M.S."/>
            <person name="Miyasato S.R."/>
            <person name="Simison M."/>
            <person name="Cherry J.M."/>
        </authorList>
    </citation>
    <scope>GENOME REANNOTATION</scope>
    <source>
        <strain>ATCC 204508 / S288c</strain>
    </source>
</reference>
<dbReference type="EMBL" id="Z38125">
    <property type="protein sequence ID" value="CAA86281.1"/>
    <property type="molecule type" value="Genomic_DNA"/>
</dbReference>
<dbReference type="PIR" id="S48473">
    <property type="entry name" value="S48473"/>
</dbReference>
<dbReference type="SMR" id="P40490"/>
<dbReference type="PaxDb" id="4932-YIL100W"/>
<dbReference type="EnsemblFungi" id="YIL100W_mRNA">
    <property type="protein sequence ID" value="YIL100W"/>
    <property type="gene ID" value="YIL100W"/>
</dbReference>
<dbReference type="AGR" id="SGD:S000001362"/>
<dbReference type="SGD" id="S000001362">
    <property type="gene designation" value="YIL100W"/>
</dbReference>
<dbReference type="HOGENOM" id="CLU_2110831_0_0_1"/>
<proteinExistence type="uncertain"/>
<organism>
    <name type="scientific">Saccharomyces cerevisiae (strain ATCC 204508 / S288c)</name>
    <name type="common">Baker's yeast</name>
    <dbReference type="NCBI Taxonomy" id="559292"/>
    <lineage>
        <taxon>Eukaryota</taxon>
        <taxon>Fungi</taxon>
        <taxon>Dikarya</taxon>
        <taxon>Ascomycota</taxon>
        <taxon>Saccharomycotina</taxon>
        <taxon>Saccharomycetes</taxon>
        <taxon>Saccharomycetales</taxon>
        <taxon>Saccharomycetaceae</taxon>
        <taxon>Saccharomyces</taxon>
    </lineage>
</organism>
<comment type="miscellaneous">
    <text evidence="2">Completely overlaps YIL100C-A.</text>
</comment>
<comment type="caution">
    <text evidence="3">Product of a dubious gene prediction unlikely to encode a functional protein. Because of that it is not part of the S.cerevisiae S288c complete/reference proteome set.</text>
</comment>
<feature type="chain" id="PRO_0000202968" description="Putative uncharacterized protein YIL100W">
    <location>
        <begin position="1"/>
        <end position="117"/>
    </location>
</feature>
<feature type="region of interest" description="Disordered" evidence="1">
    <location>
        <begin position="96"/>
        <end position="117"/>
    </location>
</feature>
<name>YIK0_YEAST</name>
<sequence length="117" mass="13493">MYIYVEVCTHVHAQATDATRPGIHICTYIYAHIYIYIYVYVNVYIQLVISRAEWAEKHSIVEKKREEKGRGAIAMDVVEYREGQAVVQWMRFEAQRKGGASKHRTLSAETGIRGEGE</sequence>
<evidence type="ECO:0000256" key="1">
    <source>
        <dbReference type="SAM" id="MobiDB-lite"/>
    </source>
</evidence>
<evidence type="ECO:0000305" key="2"/>
<evidence type="ECO:0000305" key="3">
    <source>
    </source>
</evidence>
<gene>
    <name type="ordered locus">YIL100W</name>
</gene>
<accession>P40490</accession>
<protein>
    <recommendedName>
        <fullName>Putative uncharacterized protein YIL100W</fullName>
    </recommendedName>
</protein>